<proteinExistence type="evidence at protein level"/>
<comment type="function">
    <text evidence="1 8 9 10">Matrix metalloproteinase that plays an essential role in local proteolysis of the extracellular matrix and in leukocyte migration (By similarity). Could play a role in bone osteoclastic resorption (PubMed:8132709). Cleaves KiSS1 at a Gly-|-Leu bond (By similarity). Cleaves NINJ1 to generate the Secreted ninjurin-1 form (PubMed:23142597, PubMed:32883094). Cleaves type IV and type V collagen into large C-terminal three quarter fragments and shorter N-terminal one quarter fragments. Degrades fibronectin but not laminin or Pz-peptide (By similarity).</text>
</comment>
<comment type="catalytic activity">
    <reaction evidence="1">
        <text>Cleavage of gelatin types I and V and collagen types IV and V.</text>
        <dbReference type="EC" id="3.4.24.35"/>
    </reaction>
</comment>
<comment type="cofactor">
    <cofactor evidence="1">
        <name>Zn(2+)</name>
        <dbReference type="ChEBI" id="CHEBI:29105"/>
    </cofactor>
    <text evidence="1">Binds 2 Zn(2+) ions per subunit.</text>
</comment>
<comment type="cofactor">
    <cofactor evidence="1">
        <name>Ca(2+)</name>
        <dbReference type="ChEBI" id="CHEBI:29108"/>
    </cofactor>
    <text evidence="1">Binds 3 Ca(2+) ions per subunit.</text>
</comment>
<comment type="activity regulation">
    <text evidence="1">Inhibited by histatin-3 1/24 (histatin-5). Inhibited by ECM1.</text>
</comment>
<comment type="subunit">
    <text evidence="1">Exists as monomer or homodimer; disulfide-linked. Also exists as heterodimer with LCN2. Macrophages and transformed cell lines produce only the monomeric form. Interacts with ECM1.</text>
</comment>
<comment type="subcellular location">
    <subcellularLocation>
        <location evidence="1">Secreted</location>
        <location evidence="1">Extracellular space</location>
        <location evidence="1">Extracellular matrix</location>
    </subcellularLocation>
</comment>
<comment type="induction">
    <text evidence="7">Up-regulated by ARHGEF4, SPATA13 and APC via the JNK signaling pathway in colorectal tumor cells.</text>
</comment>
<comment type="induction">
    <text evidence="6">(Microbial infection) Induced in macrophages as well as in whole animals (spleen, lung and liver) by incubation or infection with M.bovis BCG and M.tuberculosis H37Rv (at protein level) (PubMed:11500442).</text>
</comment>
<comment type="domain">
    <text evidence="1">The conserved cysteine present in the cysteine-switch motif binds the catalytic zinc ion, thus inhibiting the enzyme. The dissociation of the cysteine from the zinc ion upon the activation-peptide release activates the enzyme.</text>
</comment>
<comment type="PTM">
    <text evidence="1">N- and O-glycosylated.</text>
</comment>
<comment type="similarity">
    <text evidence="12">Belongs to the peptidase M10A family.</text>
</comment>
<reference key="1">
    <citation type="journal article" date="1993" name="Biochem. Biophys. Res. Commun.">
        <title>Molecular cloning and expression of the mouse 105-kDa gelatinase cDNA.</title>
        <authorList>
            <person name="Tanaka H."/>
            <person name="Hojo K."/>
            <person name="Yoshida H."/>
            <person name="Yoshioka T."/>
            <person name="Sugita K."/>
        </authorList>
    </citation>
    <scope>NUCLEOTIDE SEQUENCE [MRNA]</scope>
</reference>
<reference key="2">
    <citation type="journal article" date="1993" name="Blood">
        <title>Cloning and expression of the cDNA encoding mouse neutrophil gelatinase: demonstration of coordinate secondary granule protein gene expression during terminal neutrophil maturation.</title>
        <authorList>
            <person name="Graubert T."/>
            <person name="Johnston J."/>
            <person name="Berliner N."/>
        </authorList>
    </citation>
    <scope>NUCLEOTIDE SEQUENCE [MRNA]</scope>
    <scope>VARIANTS ALA-514; PRO-639 AND PRO-711</scope>
</reference>
<reference key="3">
    <citation type="journal article" date="1993" name="Eur. J. Biochem.">
        <title>Mouse gelatinase B. cDNA cloning, regulation of expression and glycosylation in WEHI-3 macrophages and gene organisation.</title>
        <authorList>
            <person name="Masure S."/>
            <person name="Nys G."/>
            <person name="Fiten P."/>
            <person name="van Damme J."/>
            <person name="Opdenakker G."/>
        </authorList>
    </citation>
    <scope>NUCLEOTIDE SEQUENCE [GENOMIC DNA / MRNA]</scope>
    <source>
        <strain>C57BL/6J</strain>
        <tissue>Liver</tissue>
    </source>
</reference>
<reference key="4">
    <citation type="journal article" date="1994" name="J. Cell Biol.">
        <title>High expression of 92-kD type IV collagenase (gelatinase B) in the osteoclast lineage during mouse development.</title>
        <authorList>
            <person name="Reponen P."/>
            <person name="Sahlberg C."/>
            <person name="Munaut C."/>
            <person name="Thesleff I."/>
            <person name="Tryggvason K."/>
        </authorList>
    </citation>
    <scope>NUCLEOTIDE SEQUENCE [MRNA]</scope>
    <scope>FUNCTION</scope>
    <source>
        <tissue>Bone</tissue>
    </source>
</reference>
<reference key="5">
    <citation type="journal article" date="2005" name="Science">
        <title>The transcriptional landscape of the mammalian genome.</title>
        <authorList>
            <person name="Carninci P."/>
            <person name="Kasukawa T."/>
            <person name="Katayama S."/>
            <person name="Gough J."/>
            <person name="Frith M.C."/>
            <person name="Maeda N."/>
            <person name="Oyama R."/>
            <person name="Ravasi T."/>
            <person name="Lenhard B."/>
            <person name="Wells C."/>
            <person name="Kodzius R."/>
            <person name="Shimokawa K."/>
            <person name="Bajic V.B."/>
            <person name="Brenner S.E."/>
            <person name="Batalov S."/>
            <person name="Forrest A.R."/>
            <person name="Zavolan M."/>
            <person name="Davis M.J."/>
            <person name="Wilming L.G."/>
            <person name="Aidinis V."/>
            <person name="Allen J.E."/>
            <person name="Ambesi-Impiombato A."/>
            <person name="Apweiler R."/>
            <person name="Aturaliya R.N."/>
            <person name="Bailey T.L."/>
            <person name="Bansal M."/>
            <person name="Baxter L."/>
            <person name="Beisel K.W."/>
            <person name="Bersano T."/>
            <person name="Bono H."/>
            <person name="Chalk A.M."/>
            <person name="Chiu K.P."/>
            <person name="Choudhary V."/>
            <person name="Christoffels A."/>
            <person name="Clutterbuck D.R."/>
            <person name="Crowe M.L."/>
            <person name="Dalla E."/>
            <person name="Dalrymple B.P."/>
            <person name="de Bono B."/>
            <person name="Della Gatta G."/>
            <person name="di Bernardo D."/>
            <person name="Down T."/>
            <person name="Engstrom P."/>
            <person name="Fagiolini M."/>
            <person name="Faulkner G."/>
            <person name="Fletcher C.F."/>
            <person name="Fukushima T."/>
            <person name="Furuno M."/>
            <person name="Futaki S."/>
            <person name="Gariboldi M."/>
            <person name="Georgii-Hemming P."/>
            <person name="Gingeras T.R."/>
            <person name="Gojobori T."/>
            <person name="Green R.E."/>
            <person name="Gustincich S."/>
            <person name="Harbers M."/>
            <person name="Hayashi Y."/>
            <person name="Hensch T.K."/>
            <person name="Hirokawa N."/>
            <person name="Hill D."/>
            <person name="Huminiecki L."/>
            <person name="Iacono M."/>
            <person name="Ikeo K."/>
            <person name="Iwama A."/>
            <person name="Ishikawa T."/>
            <person name="Jakt M."/>
            <person name="Kanapin A."/>
            <person name="Katoh M."/>
            <person name="Kawasawa Y."/>
            <person name="Kelso J."/>
            <person name="Kitamura H."/>
            <person name="Kitano H."/>
            <person name="Kollias G."/>
            <person name="Krishnan S.P."/>
            <person name="Kruger A."/>
            <person name="Kummerfeld S.K."/>
            <person name="Kurochkin I.V."/>
            <person name="Lareau L.F."/>
            <person name="Lazarevic D."/>
            <person name="Lipovich L."/>
            <person name="Liu J."/>
            <person name="Liuni S."/>
            <person name="McWilliam S."/>
            <person name="Madan Babu M."/>
            <person name="Madera M."/>
            <person name="Marchionni L."/>
            <person name="Matsuda H."/>
            <person name="Matsuzawa S."/>
            <person name="Miki H."/>
            <person name="Mignone F."/>
            <person name="Miyake S."/>
            <person name="Morris K."/>
            <person name="Mottagui-Tabar S."/>
            <person name="Mulder N."/>
            <person name="Nakano N."/>
            <person name="Nakauchi H."/>
            <person name="Ng P."/>
            <person name="Nilsson R."/>
            <person name="Nishiguchi S."/>
            <person name="Nishikawa S."/>
            <person name="Nori F."/>
            <person name="Ohara O."/>
            <person name="Okazaki Y."/>
            <person name="Orlando V."/>
            <person name="Pang K.C."/>
            <person name="Pavan W.J."/>
            <person name="Pavesi G."/>
            <person name="Pesole G."/>
            <person name="Petrovsky N."/>
            <person name="Piazza S."/>
            <person name="Reed J."/>
            <person name="Reid J.F."/>
            <person name="Ring B.Z."/>
            <person name="Ringwald M."/>
            <person name="Rost B."/>
            <person name="Ruan Y."/>
            <person name="Salzberg S.L."/>
            <person name="Sandelin A."/>
            <person name="Schneider C."/>
            <person name="Schoenbach C."/>
            <person name="Sekiguchi K."/>
            <person name="Semple C.A."/>
            <person name="Seno S."/>
            <person name="Sessa L."/>
            <person name="Sheng Y."/>
            <person name="Shibata Y."/>
            <person name="Shimada H."/>
            <person name="Shimada K."/>
            <person name="Silva D."/>
            <person name="Sinclair B."/>
            <person name="Sperling S."/>
            <person name="Stupka E."/>
            <person name="Sugiura K."/>
            <person name="Sultana R."/>
            <person name="Takenaka Y."/>
            <person name="Taki K."/>
            <person name="Tammoja K."/>
            <person name="Tan S.L."/>
            <person name="Tang S."/>
            <person name="Taylor M.S."/>
            <person name="Tegner J."/>
            <person name="Teichmann S.A."/>
            <person name="Ueda H.R."/>
            <person name="van Nimwegen E."/>
            <person name="Verardo R."/>
            <person name="Wei C.L."/>
            <person name="Yagi K."/>
            <person name="Yamanishi H."/>
            <person name="Zabarovsky E."/>
            <person name="Zhu S."/>
            <person name="Zimmer A."/>
            <person name="Hide W."/>
            <person name="Bult C."/>
            <person name="Grimmond S.M."/>
            <person name="Teasdale R.D."/>
            <person name="Liu E.T."/>
            <person name="Brusic V."/>
            <person name="Quackenbush J."/>
            <person name="Wahlestedt C."/>
            <person name="Mattick J.S."/>
            <person name="Hume D.A."/>
            <person name="Kai C."/>
            <person name="Sasaki D."/>
            <person name="Tomaru Y."/>
            <person name="Fukuda S."/>
            <person name="Kanamori-Katayama M."/>
            <person name="Suzuki M."/>
            <person name="Aoki J."/>
            <person name="Arakawa T."/>
            <person name="Iida J."/>
            <person name="Imamura K."/>
            <person name="Itoh M."/>
            <person name="Kato T."/>
            <person name="Kawaji H."/>
            <person name="Kawagashira N."/>
            <person name="Kawashima T."/>
            <person name="Kojima M."/>
            <person name="Kondo S."/>
            <person name="Konno H."/>
            <person name="Nakano K."/>
            <person name="Ninomiya N."/>
            <person name="Nishio T."/>
            <person name="Okada M."/>
            <person name="Plessy C."/>
            <person name="Shibata K."/>
            <person name="Shiraki T."/>
            <person name="Suzuki S."/>
            <person name="Tagami M."/>
            <person name="Waki K."/>
            <person name="Watahiki A."/>
            <person name="Okamura-Oho Y."/>
            <person name="Suzuki H."/>
            <person name="Kawai J."/>
            <person name="Hayashizaki Y."/>
        </authorList>
    </citation>
    <scope>NUCLEOTIDE SEQUENCE [LARGE SCALE MRNA]</scope>
    <source>
        <strain>C57BL/6J</strain>
        <tissue>Lung</tissue>
    </source>
</reference>
<reference key="6">
    <citation type="journal article" date="2009" name="PLoS Biol.">
        <title>Lineage-specific biology revealed by a finished genome assembly of the mouse.</title>
        <authorList>
            <person name="Church D.M."/>
            <person name="Goodstadt L."/>
            <person name="Hillier L.W."/>
            <person name="Zody M.C."/>
            <person name="Goldstein S."/>
            <person name="She X."/>
            <person name="Bult C.J."/>
            <person name="Agarwala R."/>
            <person name="Cherry J.L."/>
            <person name="DiCuccio M."/>
            <person name="Hlavina W."/>
            <person name="Kapustin Y."/>
            <person name="Meric P."/>
            <person name="Maglott D."/>
            <person name="Birtle Z."/>
            <person name="Marques A.C."/>
            <person name="Graves T."/>
            <person name="Zhou S."/>
            <person name="Teague B."/>
            <person name="Potamousis K."/>
            <person name="Churas C."/>
            <person name="Place M."/>
            <person name="Herschleb J."/>
            <person name="Runnheim R."/>
            <person name="Forrest D."/>
            <person name="Amos-Landgraf J."/>
            <person name="Schwartz D.C."/>
            <person name="Cheng Z."/>
            <person name="Lindblad-Toh K."/>
            <person name="Eichler E.E."/>
            <person name="Ponting C.P."/>
        </authorList>
    </citation>
    <scope>NUCLEOTIDE SEQUENCE [LARGE SCALE GENOMIC DNA]</scope>
    <source>
        <strain>C57BL/6J</strain>
    </source>
</reference>
<reference key="7">
    <citation type="journal article" date="2004" name="Genome Res.">
        <title>The status, quality, and expansion of the NIH full-length cDNA project: the Mammalian Gene Collection (MGC).</title>
        <authorList>
            <consortium name="The MGC Project Team"/>
        </authorList>
    </citation>
    <scope>NUCLEOTIDE SEQUENCE [LARGE SCALE MRNA]</scope>
    <source>
        <tissue>Olfactory epithelium</tissue>
    </source>
</reference>
<reference key="8">
    <citation type="journal article" date="2001" name="Infect. Immun.">
        <title>Production of matrix metalloproteinases in response to mycobacterial infection.</title>
        <authorList>
            <person name="Quiding-Jaerbrink M."/>
            <person name="Smith D.A."/>
            <person name="Bancroft G.J."/>
        </authorList>
    </citation>
    <scope>INDUCTION BY MYCOBACTERIA</scope>
    <source>
        <strain>BALB/cJ</strain>
        <tissue>Liver</tissue>
        <tissue>Lung</tissue>
        <tissue>Macrophage</tissue>
        <tissue>Spleen</tissue>
    </source>
</reference>
<reference key="9">
    <citation type="journal article" date="2009" name="EMBO Rep.">
        <title>The adenomatous polyposis coli-associated exchange factors Asef and Asef2 are required for adenoma formation in Apc(Min/+)mice.</title>
        <authorList>
            <person name="Kawasaki Y."/>
            <person name="Tsuji S."/>
            <person name="Muroya K."/>
            <person name="Furukawa S."/>
            <person name="Shibata Y."/>
            <person name="Okuno M."/>
            <person name="Ohwada S."/>
            <person name="Akiyama T."/>
        </authorList>
    </citation>
    <scope>INDUCTION</scope>
</reference>
<reference key="10">
    <citation type="journal article" date="2010" name="Cell">
        <title>A tissue-specific atlas of mouse protein phosphorylation and expression.</title>
        <authorList>
            <person name="Huttlin E.L."/>
            <person name="Jedrychowski M.P."/>
            <person name="Elias J.E."/>
            <person name="Goswami T."/>
            <person name="Rad R."/>
            <person name="Beausoleil S.A."/>
            <person name="Villen J."/>
            <person name="Haas W."/>
            <person name="Sowa M.E."/>
            <person name="Gygi S.P."/>
        </authorList>
    </citation>
    <scope>IDENTIFICATION BY MASS SPECTROMETRY [LARGE SCALE ANALYSIS]</scope>
    <source>
        <tissue>Spleen</tissue>
    </source>
</reference>
<reference key="11">
    <citation type="journal article" date="2012" name="Biochem. Biophys. Res. Commun.">
        <title>The N-terminal ectodomain of Ninjurin1 liberated by MMP9 has chemotactic activity.</title>
        <authorList>
            <person name="Ahn B.J."/>
            <person name="Le H."/>
            <person name="Shin M.W."/>
            <person name="Bae S.J."/>
            <person name="Lee E.J."/>
            <person name="Wee H.J."/>
            <person name="Cha J.H."/>
            <person name="Park J.H."/>
            <person name="Lee H.S."/>
            <person name="Lee H.J."/>
            <person name="Jung H."/>
            <person name="Park Z.Y."/>
            <person name="Park S.H."/>
            <person name="Han B.W."/>
            <person name="Seo J.H."/>
            <person name="Lo E.H."/>
            <person name="Kim K.W."/>
        </authorList>
    </citation>
    <scope>FUNCTION</scope>
</reference>
<reference key="12">
    <citation type="journal article" date="2020" name="Circulation">
        <title>Anti-inflammatory actions of soluble ninjurin-1 ameliorate atherosclerosis.</title>
        <authorList>
            <person name="Jeon S."/>
            <person name="Kim T.K."/>
            <person name="Jeong S.J."/>
            <person name="Jung I.H."/>
            <person name="Kim N."/>
            <person name="Lee M.N."/>
            <person name="Sonn S.K."/>
            <person name="Seo S."/>
            <person name="Jin J."/>
            <person name="Kweon H.Y."/>
            <person name="Kim S."/>
            <person name="Shim D."/>
            <person name="Park Y.M."/>
            <person name="Lee S.H."/>
            <person name="Kim K.W."/>
            <person name="Cybulsky M.I."/>
            <person name="Shim H."/>
            <person name="Roh T.Y."/>
            <person name="Park W.Y."/>
            <person name="Lee H.O."/>
            <person name="Choi J.H."/>
            <person name="Park S.H."/>
            <person name="Oh G.T."/>
        </authorList>
    </citation>
    <scope>FUNCTION</scope>
</reference>
<gene>
    <name type="primary">Mmp9</name>
    <name type="synonym">Clg4b</name>
</gene>
<dbReference type="EC" id="3.4.24.35" evidence="1"/>
<dbReference type="EMBL" id="D12712">
    <property type="protein sequence ID" value="BAA02208.1"/>
    <property type="molecule type" value="mRNA"/>
</dbReference>
<dbReference type="EMBL" id="S67830">
    <property type="protein sequence ID" value="AAB28942.1"/>
    <property type="molecule type" value="mRNA"/>
</dbReference>
<dbReference type="EMBL" id="X72794">
    <property type="protein sequence ID" value="CAA51314.1"/>
    <property type="molecule type" value="Genomic_DNA"/>
</dbReference>
<dbReference type="EMBL" id="X72795">
    <property type="protein sequence ID" value="CAA51315.1"/>
    <property type="molecule type" value="mRNA"/>
</dbReference>
<dbReference type="EMBL" id="Z27231">
    <property type="protein sequence ID" value="CAA81745.1"/>
    <property type="molecule type" value="mRNA"/>
</dbReference>
<dbReference type="EMBL" id="AK004651">
    <property type="protein sequence ID" value="BAB23442.1"/>
    <property type="molecule type" value="mRNA"/>
</dbReference>
<dbReference type="EMBL" id="AK159292">
    <property type="protein sequence ID" value="BAE34968.1"/>
    <property type="molecule type" value="mRNA"/>
</dbReference>
<dbReference type="EMBL" id="AL591495">
    <property type="status" value="NOT_ANNOTATED_CDS"/>
    <property type="molecule type" value="Genomic_DNA"/>
</dbReference>
<dbReference type="EMBL" id="BC046991">
    <property type="protein sequence ID" value="AAH46991.1"/>
    <property type="molecule type" value="mRNA"/>
</dbReference>
<dbReference type="CCDS" id="CCDS17066.1"/>
<dbReference type="PIR" id="I52580">
    <property type="entry name" value="I52580"/>
</dbReference>
<dbReference type="PIR" id="JC1456">
    <property type="entry name" value="JC1456"/>
</dbReference>
<dbReference type="RefSeq" id="NP_038627.1">
    <property type="nucleotide sequence ID" value="NM_013599.5"/>
</dbReference>
<dbReference type="SMR" id="P41245"/>
<dbReference type="BioGRID" id="201454">
    <property type="interactions" value="2"/>
</dbReference>
<dbReference type="FunCoup" id="P41245">
    <property type="interactions" value="378"/>
</dbReference>
<dbReference type="STRING" id="10090.ENSMUSP00000017881"/>
<dbReference type="BindingDB" id="P41245"/>
<dbReference type="ChEMBL" id="CHEMBL2214"/>
<dbReference type="MEROPS" id="M10.004"/>
<dbReference type="CarbonylDB" id="P41245"/>
<dbReference type="GlyCosmos" id="P41245">
    <property type="glycosylation" value="3 sites, No reported glycans"/>
</dbReference>
<dbReference type="GlyGen" id="P41245">
    <property type="glycosylation" value="10 sites"/>
</dbReference>
<dbReference type="PhosphoSitePlus" id="P41245"/>
<dbReference type="CPTAC" id="non-CPTAC-4047"/>
<dbReference type="jPOST" id="P41245"/>
<dbReference type="PaxDb" id="10090-ENSMUSP00000017881"/>
<dbReference type="PeptideAtlas" id="P41245"/>
<dbReference type="ProteomicsDB" id="290265"/>
<dbReference type="ABCD" id="P41245">
    <property type="antibodies" value="2 sequenced antibodies"/>
</dbReference>
<dbReference type="Antibodypedia" id="774">
    <property type="antibodies" value="2067 antibodies from 54 providers"/>
</dbReference>
<dbReference type="DNASU" id="17395"/>
<dbReference type="Ensembl" id="ENSMUST00000017881.3">
    <property type="protein sequence ID" value="ENSMUSP00000017881.3"/>
    <property type="gene ID" value="ENSMUSG00000017737.3"/>
</dbReference>
<dbReference type="GeneID" id="17395"/>
<dbReference type="KEGG" id="mmu:17395"/>
<dbReference type="UCSC" id="uc008nwt.2">
    <property type="organism name" value="mouse"/>
</dbReference>
<dbReference type="AGR" id="MGI:97011"/>
<dbReference type="CTD" id="4318"/>
<dbReference type="MGI" id="MGI:97011">
    <property type="gene designation" value="Mmp9"/>
</dbReference>
<dbReference type="VEuPathDB" id="HostDB:ENSMUSG00000017737"/>
<dbReference type="eggNOG" id="KOG1565">
    <property type="taxonomic scope" value="Eukaryota"/>
</dbReference>
<dbReference type="GeneTree" id="ENSGT00940000157415"/>
<dbReference type="HOGENOM" id="CLU_015489_6_2_1"/>
<dbReference type="InParanoid" id="P41245"/>
<dbReference type="OMA" id="REKAYFC"/>
<dbReference type="OrthoDB" id="406838at2759"/>
<dbReference type="PhylomeDB" id="P41245"/>
<dbReference type="TreeFam" id="TF315428"/>
<dbReference type="BRENDA" id="3.4.24.35">
    <property type="organism ID" value="3474"/>
</dbReference>
<dbReference type="Reactome" id="R-MMU-1433557">
    <property type="pathway name" value="Signaling by SCF-KIT"/>
</dbReference>
<dbReference type="Reactome" id="R-MMU-1442490">
    <property type="pathway name" value="Collagen degradation"/>
</dbReference>
<dbReference type="Reactome" id="R-MMU-1474228">
    <property type="pathway name" value="Degradation of the extracellular matrix"/>
</dbReference>
<dbReference type="Reactome" id="R-MMU-1592389">
    <property type="pathway name" value="Activation of Matrix Metalloproteinases"/>
</dbReference>
<dbReference type="Reactome" id="R-MMU-2022090">
    <property type="pathway name" value="Assembly of collagen fibrils and other multimeric structures"/>
</dbReference>
<dbReference type="Reactome" id="R-MMU-3928665">
    <property type="pathway name" value="EPH-ephrin mediated repulsion of cells"/>
</dbReference>
<dbReference type="Reactome" id="R-MMU-6798695">
    <property type="pathway name" value="Neutrophil degranulation"/>
</dbReference>
<dbReference type="Reactome" id="R-MMU-9009391">
    <property type="pathway name" value="Extra-nuclear estrogen signaling"/>
</dbReference>
<dbReference type="BioGRID-ORCS" id="17395">
    <property type="hits" value="2 hits in 80 CRISPR screens"/>
</dbReference>
<dbReference type="PRO" id="PR:P41245"/>
<dbReference type="Proteomes" id="UP000000589">
    <property type="component" value="Chromosome 2"/>
</dbReference>
<dbReference type="RNAct" id="P41245">
    <property type="molecule type" value="protein"/>
</dbReference>
<dbReference type="Bgee" id="ENSMUSG00000017737">
    <property type="expression patterns" value="Expressed in granulocyte and 197 other cell types or tissues"/>
</dbReference>
<dbReference type="ExpressionAtlas" id="P41245">
    <property type="expression patterns" value="baseline and differential"/>
</dbReference>
<dbReference type="GO" id="GO:0062023">
    <property type="term" value="C:collagen-containing extracellular matrix"/>
    <property type="evidence" value="ECO:0007005"/>
    <property type="project" value="BHF-UCL"/>
</dbReference>
<dbReference type="GO" id="GO:0005615">
    <property type="term" value="C:extracellular space"/>
    <property type="evidence" value="ECO:0000250"/>
    <property type="project" value="UniProtKB"/>
</dbReference>
<dbReference type="GO" id="GO:0042802">
    <property type="term" value="F:identical protein binding"/>
    <property type="evidence" value="ECO:0007669"/>
    <property type="project" value="Ensembl"/>
</dbReference>
<dbReference type="GO" id="GO:0004222">
    <property type="term" value="F:metalloendopeptidase activity"/>
    <property type="evidence" value="ECO:0000314"/>
    <property type="project" value="UniProtKB"/>
</dbReference>
<dbReference type="GO" id="GO:0008233">
    <property type="term" value="F:peptidase activity"/>
    <property type="evidence" value="ECO:0000314"/>
    <property type="project" value="MGI"/>
</dbReference>
<dbReference type="GO" id="GO:0008270">
    <property type="term" value="F:zinc ion binding"/>
    <property type="evidence" value="ECO:0007669"/>
    <property type="project" value="InterPro"/>
</dbReference>
<dbReference type="GO" id="GO:0006915">
    <property type="term" value="P:apoptotic process"/>
    <property type="evidence" value="ECO:0000315"/>
    <property type="project" value="MGI"/>
</dbReference>
<dbReference type="GO" id="GO:0016477">
    <property type="term" value="P:cell migration"/>
    <property type="evidence" value="ECO:0007669"/>
    <property type="project" value="Ensembl"/>
</dbReference>
<dbReference type="GO" id="GO:0071492">
    <property type="term" value="P:cellular response to UV-A"/>
    <property type="evidence" value="ECO:0007669"/>
    <property type="project" value="Ensembl"/>
</dbReference>
<dbReference type="GO" id="GO:0030574">
    <property type="term" value="P:collagen catabolic process"/>
    <property type="evidence" value="ECO:0000314"/>
    <property type="project" value="MGI"/>
</dbReference>
<dbReference type="GO" id="GO:0007566">
    <property type="term" value="P:embryo implantation"/>
    <property type="evidence" value="ECO:0000314"/>
    <property type="project" value="MGI"/>
</dbReference>
<dbReference type="GO" id="GO:0035987">
    <property type="term" value="P:endodermal cell differentiation"/>
    <property type="evidence" value="ECO:0007669"/>
    <property type="project" value="Ensembl"/>
</dbReference>
<dbReference type="GO" id="GO:0030198">
    <property type="term" value="P:extracellular matrix organization"/>
    <property type="evidence" value="ECO:0000315"/>
    <property type="project" value="MGI"/>
</dbReference>
<dbReference type="GO" id="GO:2000697">
    <property type="term" value="P:negative regulation of epithelial cell differentiation involved in kidney development"/>
    <property type="evidence" value="ECO:0000314"/>
    <property type="project" value="ARUK-UCL"/>
</dbReference>
<dbReference type="GO" id="GO:2001243">
    <property type="term" value="P:negative regulation of intrinsic apoptotic signaling pathway"/>
    <property type="evidence" value="ECO:0007669"/>
    <property type="project" value="Ensembl"/>
</dbReference>
<dbReference type="GO" id="GO:0043065">
    <property type="term" value="P:positive regulation of apoptotic process"/>
    <property type="evidence" value="ECO:0000315"/>
    <property type="project" value="MGI"/>
</dbReference>
<dbReference type="GO" id="GO:0045742">
    <property type="term" value="P:positive regulation of epidermal growth factor receptor signaling pathway"/>
    <property type="evidence" value="ECO:0007669"/>
    <property type="project" value="Ensembl"/>
</dbReference>
<dbReference type="GO" id="GO:0051549">
    <property type="term" value="P:positive regulation of keratinocyte migration"/>
    <property type="evidence" value="ECO:0007669"/>
    <property type="project" value="Ensembl"/>
</dbReference>
<dbReference type="GO" id="GO:0090200">
    <property type="term" value="P:positive regulation of release of cytochrome c from mitochondria"/>
    <property type="evidence" value="ECO:0007669"/>
    <property type="project" value="Ensembl"/>
</dbReference>
<dbReference type="GO" id="GO:1904707">
    <property type="term" value="P:positive regulation of vascular associated smooth muscle cell proliferation"/>
    <property type="evidence" value="ECO:0007669"/>
    <property type="project" value="Ensembl"/>
</dbReference>
<dbReference type="GO" id="GO:0006508">
    <property type="term" value="P:proteolysis"/>
    <property type="evidence" value="ECO:0000250"/>
    <property type="project" value="UniProtKB"/>
</dbReference>
<dbReference type="GO" id="GO:1904645">
    <property type="term" value="P:response to amyloid-beta"/>
    <property type="evidence" value="ECO:0000314"/>
    <property type="project" value="ARUK-UCL"/>
</dbReference>
<dbReference type="GO" id="GO:0001501">
    <property type="term" value="P:skeletal system development"/>
    <property type="evidence" value="ECO:0000315"/>
    <property type="project" value="MGI"/>
</dbReference>
<dbReference type="CDD" id="cd00062">
    <property type="entry name" value="FN2"/>
    <property type="match status" value="2"/>
</dbReference>
<dbReference type="CDD" id="cd00094">
    <property type="entry name" value="HX"/>
    <property type="match status" value="1"/>
</dbReference>
<dbReference type="CDD" id="cd04278">
    <property type="entry name" value="ZnMc_MMP"/>
    <property type="match status" value="1"/>
</dbReference>
<dbReference type="FunFam" id="3.40.390.10:FF:000010">
    <property type="entry name" value="72 kDa type IV collagenase"/>
    <property type="match status" value="1"/>
</dbReference>
<dbReference type="FunFam" id="2.10.10.10:FF:000001">
    <property type="entry name" value="Fibronectin 1a isoform 1"/>
    <property type="match status" value="3"/>
</dbReference>
<dbReference type="FunFam" id="2.110.10.10:FF:000011">
    <property type="entry name" value="Matrix metalloproteinase-9"/>
    <property type="match status" value="1"/>
</dbReference>
<dbReference type="Gene3D" id="3.40.390.10">
    <property type="entry name" value="Collagenase (Catalytic Domain)"/>
    <property type="match status" value="2"/>
</dbReference>
<dbReference type="Gene3D" id="2.10.10.10">
    <property type="entry name" value="Fibronectin, type II, collagen-binding"/>
    <property type="match status" value="2"/>
</dbReference>
<dbReference type="Gene3D" id="2.110.10.10">
    <property type="entry name" value="Hemopexin-like domain"/>
    <property type="match status" value="1"/>
</dbReference>
<dbReference type="InterPro" id="IPR000562">
    <property type="entry name" value="FN_type2_dom"/>
</dbReference>
<dbReference type="InterPro" id="IPR036943">
    <property type="entry name" value="FN_type2_sf"/>
</dbReference>
<dbReference type="InterPro" id="IPR000585">
    <property type="entry name" value="Hemopexin-like_dom"/>
</dbReference>
<dbReference type="InterPro" id="IPR036375">
    <property type="entry name" value="Hemopexin-like_dom_sf"/>
</dbReference>
<dbReference type="InterPro" id="IPR018487">
    <property type="entry name" value="Hemopexin-like_repeat"/>
</dbReference>
<dbReference type="InterPro" id="IPR018486">
    <property type="entry name" value="Hemopexin_CS"/>
</dbReference>
<dbReference type="InterPro" id="IPR013806">
    <property type="entry name" value="Kringle-like"/>
</dbReference>
<dbReference type="InterPro" id="IPR033739">
    <property type="entry name" value="M10A_MMP"/>
</dbReference>
<dbReference type="InterPro" id="IPR024079">
    <property type="entry name" value="MetalloPept_cat_dom_sf"/>
</dbReference>
<dbReference type="InterPro" id="IPR001818">
    <property type="entry name" value="Pept_M10_metallopeptidase"/>
</dbReference>
<dbReference type="InterPro" id="IPR021190">
    <property type="entry name" value="Pept_M10A"/>
</dbReference>
<dbReference type="InterPro" id="IPR021158">
    <property type="entry name" value="Pept_M10A_Zn_BS"/>
</dbReference>
<dbReference type="InterPro" id="IPR006026">
    <property type="entry name" value="Peptidase_Metallo"/>
</dbReference>
<dbReference type="InterPro" id="IPR036365">
    <property type="entry name" value="PGBD-like_sf"/>
</dbReference>
<dbReference type="InterPro" id="IPR006970">
    <property type="entry name" value="PT"/>
</dbReference>
<dbReference type="PANTHER" id="PTHR10201">
    <property type="entry name" value="MATRIX METALLOPROTEINASE"/>
    <property type="match status" value="1"/>
</dbReference>
<dbReference type="PANTHER" id="PTHR10201:SF30">
    <property type="entry name" value="MATRIX METALLOPROTEINASE-9"/>
    <property type="match status" value="1"/>
</dbReference>
<dbReference type="Pfam" id="PF00040">
    <property type="entry name" value="fn2"/>
    <property type="match status" value="3"/>
</dbReference>
<dbReference type="Pfam" id="PF00045">
    <property type="entry name" value="Hemopexin"/>
    <property type="match status" value="2"/>
</dbReference>
<dbReference type="Pfam" id="PF00413">
    <property type="entry name" value="Peptidase_M10"/>
    <property type="match status" value="2"/>
</dbReference>
<dbReference type="Pfam" id="PF04886">
    <property type="entry name" value="PT"/>
    <property type="match status" value="1"/>
</dbReference>
<dbReference type="PRINTS" id="PR00013">
    <property type="entry name" value="FNTYPEII"/>
</dbReference>
<dbReference type="PRINTS" id="PR00138">
    <property type="entry name" value="MATRIXIN"/>
</dbReference>
<dbReference type="SMART" id="SM00059">
    <property type="entry name" value="FN2"/>
    <property type="match status" value="3"/>
</dbReference>
<dbReference type="SMART" id="SM00120">
    <property type="entry name" value="HX"/>
    <property type="match status" value="4"/>
</dbReference>
<dbReference type="SMART" id="SM00235">
    <property type="entry name" value="ZnMc"/>
    <property type="match status" value="1"/>
</dbReference>
<dbReference type="SUPFAM" id="SSF50923">
    <property type="entry name" value="Hemopexin-like domain"/>
    <property type="match status" value="1"/>
</dbReference>
<dbReference type="SUPFAM" id="SSF57440">
    <property type="entry name" value="Kringle-like"/>
    <property type="match status" value="3"/>
</dbReference>
<dbReference type="SUPFAM" id="SSF55486">
    <property type="entry name" value="Metalloproteases ('zincins'), catalytic domain"/>
    <property type="match status" value="1"/>
</dbReference>
<dbReference type="SUPFAM" id="SSF47090">
    <property type="entry name" value="PGBD-like"/>
    <property type="match status" value="1"/>
</dbReference>
<dbReference type="PROSITE" id="PS00546">
    <property type="entry name" value="CYSTEINE_SWITCH"/>
    <property type="match status" value="1"/>
</dbReference>
<dbReference type="PROSITE" id="PS00023">
    <property type="entry name" value="FN2_1"/>
    <property type="match status" value="3"/>
</dbReference>
<dbReference type="PROSITE" id="PS51092">
    <property type="entry name" value="FN2_2"/>
    <property type="match status" value="3"/>
</dbReference>
<dbReference type="PROSITE" id="PS00024">
    <property type="entry name" value="HEMOPEXIN"/>
    <property type="match status" value="1"/>
</dbReference>
<dbReference type="PROSITE" id="PS51642">
    <property type="entry name" value="HEMOPEXIN_2"/>
    <property type="match status" value="4"/>
</dbReference>
<dbReference type="PROSITE" id="PS00142">
    <property type="entry name" value="ZINC_PROTEASE"/>
    <property type="match status" value="1"/>
</dbReference>
<sequence>MSPWQPLLLALLAFGCSSAAPYQRQPTFVVFPKDLKTSNLTDTQLAEAYLYRYGYTRAAQMMGEKQSLRPALLMLQKQLSLPQTGELDSQTLKAIRTPRCGVPDVGRFQTFKGLKWDHHNITYWIQNYSEDLPRDMIDDAFARAFAVWGEVAPLTFTRVYGPEADIVIQFGVAEHGDGYPFDGKDGLLAHAFPPGAGVQGDAHFDDDELWSLGKGVVIPTYYGNSNGAPCHFPFTFEGRSYSACTTDGRNDGTPWCSTTADYDKDGKFGFCPSERLYTEHGNGEGKPCVFPFIFEGRSYSACTTKGRSDGYRWCATTANYDQDKLYGFCPTRVDATVVGGNSAGELCVFPFVFLGKQYSSCTSDGRRDGRLWCATTSNFDTDKKWGFCPDQGYSLFLVAAHEFGHALGLDHSSVPEALMYPLYSYLEGFPLNKDDIDGIQYLYGRGSKPDPRPPATTTTEPQPTAPPTMCPTIPPTAYPTVGPTVGPTGAPSPGPTSSPSPGPTGAPSPGPTAPPTAGSSEASTESLSPADNPCNVDVFDAIAEIQGALHFFKDGWYWKFLNHRGSPLQGPFLTARTWPALPATLDSAFEDPQTKRVFFFSGRQMWVYTGKTVLGPRSLDKLGLGPEVTHVSGLLPRRLGKALLFSKGRVWRFDLKSQKVDPQSVIRVDKEFSGVPWNSHDIFQYQDKAYFCHGKFFWRVSFQNEVNKVDHEVNQVDDVGYVTYDLLQCP</sequence>
<keyword id="KW-0106">Calcium</keyword>
<keyword id="KW-0177">Collagen degradation</keyword>
<keyword id="KW-1015">Disulfide bond</keyword>
<keyword id="KW-0272">Extracellular matrix</keyword>
<keyword id="KW-0325">Glycoprotein</keyword>
<keyword id="KW-0378">Hydrolase</keyword>
<keyword id="KW-0479">Metal-binding</keyword>
<keyword id="KW-0482">Metalloprotease</keyword>
<keyword id="KW-0645">Protease</keyword>
<keyword id="KW-1185">Reference proteome</keyword>
<keyword id="KW-0677">Repeat</keyword>
<keyword id="KW-0964">Secreted</keyword>
<keyword id="KW-0732">Signal</keyword>
<keyword id="KW-0862">Zinc</keyword>
<keyword id="KW-0865">Zymogen</keyword>
<evidence type="ECO:0000250" key="1">
    <source>
        <dbReference type="UniProtKB" id="P14780"/>
    </source>
</evidence>
<evidence type="ECO:0000255" key="2"/>
<evidence type="ECO:0000255" key="3">
    <source>
        <dbReference type="PROSITE-ProRule" id="PRU00479"/>
    </source>
</evidence>
<evidence type="ECO:0000255" key="4">
    <source>
        <dbReference type="PROSITE-ProRule" id="PRU10095"/>
    </source>
</evidence>
<evidence type="ECO:0000256" key="5">
    <source>
        <dbReference type="SAM" id="MobiDB-lite"/>
    </source>
</evidence>
<evidence type="ECO:0000269" key="6">
    <source>
    </source>
</evidence>
<evidence type="ECO:0000269" key="7">
    <source>
    </source>
</evidence>
<evidence type="ECO:0000269" key="8">
    <source>
    </source>
</evidence>
<evidence type="ECO:0000269" key="9">
    <source>
    </source>
</evidence>
<evidence type="ECO:0000269" key="10">
    <source>
    </source>
</evidence>
<evidence type="ECO:0000269" key="11">
    <source>
    </source>
</evidence>
<evidence type="ECO:0000305" key="12"/>
<organism>
    <name type="scientific">Mus musculus</name>
    <name type="common">Mouse</name>
    <dbReference type="NCBI Taxonomy" id="10090"/>
    <lineage>
        <taxon>Eukaryota</taxon>
        <taxon>Metazoa</taxon>
        <taxon>Chordata</taxon>
        <taxon>Craniata</taxon>
        <taxon>Vertebrata</taxon>
        <taxon>Euteleostomi</taxon>
        <taxon>Mammalia</taxon>
        <taxon>Eutheria</taxon>
        <taxon>Euarchontoglires</taxon>
        <taxon>Glires</taxon>
        <taxon>Rodentia</taxon>
        <taxon>Myomorpha</taxon>
        <taxon>Muroidea</taxon>
        <taxon>Muridae</taxon>
        <taxon>Murinae</taxon>
        <taxon>Mus</taxon>
        <taxon>Mus</taxon>
    </lineage>
</organism>
<name>MMP9_MOUSE</name>
<feature type="signal peptide" evidence="1">
    <location>
        <begin position="1"/>
        <end position="19"/>
    </location>
</feature>
<feature type="propeptide" id="PRO_0000028758" description="Activation peptide" evidence="1">
    <location>
        <begin position="20"/>
        <end position="107"/>
    </location>
</feature>
<feature type="chain" id="PRO_0000028759" description="Matrix metalloproteinase-9">
    <location>
        <begin position="108"/>
        <end position="730"/>
    </location>
</feature>
<feature type="domain" description="Fibronectin type-II 1" evidence="3">
    <location>
        <begin position="225"/>
        <end position="273"/>
    </location>
</feature>
<feature type="domain" description="Fibronectin type-II 2" evidence="3">
    <location>
        <begin position="283"/>
        <end position="331"/>
    </location>
</feature>
<feature type="domain" description="Fibronectin type-II 3" evidence="3">
    <location>
        <begin position="342"/>
        <end position="390"/>
    </location>
</feature>
<feature type="repeat" description="Hemopexin 1">
    <location>
        <begin position="536"/>
        <end position="581"/>
    </location>
</feature>
<feature type="repeat" description="Hemopexin 2">
    <location>
        <begin position="582"/>
        <end position="626"/>
    </location>
</feature>
<feature type="repeat" description="Hemopexin 3">
    <location>
        <begin position="628"/>
        <end position="675"/>
    </location>
</feature>
<feature type="repeat" description="Hemopexin 4">
    <location>
        <begin position="676"/>
        <end position="729"/>
    </location>
</feature>
<feature type="region of interest" description="Disordered" evidence="5">
    <location>
        <begin position="442"/>
        <end position="529"/>
    </location>
</feature>
<feature type="short sequence motif" description="Cysteine switch" evidence="1">
    <location>
        <begin position="98"/>
        <end position="105"/>
    </location>
</feature>
<feature type="compositionally biased region" description="Pro residues" evidence="5">
    <location>
        <begin position="463"/>
        <end position="477"/>
    </location>
</feature>
<feature type="compositionally biased region" description="Low complexity" evidence="5">
    <location>
        <begin position="478"/>
        <end position="489"/>
    </location>
</feature>
<feature type="compositionally biased region" description="Pro residues" evidence="5">
    <location>
        <begin position="490"/>
        <end position="514"/>
    </location>
</feature>
<feature type="active site" evidence="4">
    <location>
        <position position="402"/>
    </location>
</feature>
<feature type="binding site" description="in inhibited form" evidence="1">
    <location>
        <position position="100"/>
    </location>
    <ligand>
        <name>Zn(2+)</name>
        <dbReference type="ChEBI" id="CHEBI:29105"/>
        <label>2</label>
        <note>catalytic</note>
    </ligand>
</feature>
<feature type="binding site" evidence="1">
    <location>
        <position position="131"/>
    </location>
    <ligand>
        <name>Ca(2+)</name>
        <dbReference type="ChEBI" id="CHEBI:29108"/>
        <label>1</label>
    </ligand>
</feature>
<feature type="binding site" evidence="1">
    <location>
        <position position="165"/>
    </location>
    <ligand>
        <name>Ca(2+)</name>
        <dbReference type="ChEBI" id="CHEBI:29108"/>
        <label>2</label>
    </ligand>
</feature>
<feature type="binding site" evidence="1">
    <location>
        <position position="175"/>
    </location>
    <ligand>
        <name>Zn(2+)</name>
        <dbReference type="ChEBI" id="CHEBI:29105"/>
        <label>1</label>
        <note>structural</note>
    </ligand>
</feature>
<feature type="binding site" evidence="1">
    <location>
        <position position="177"/>
    </location>
    <ligand>
        <name>Zn(2+)</name>
        <dbReference type="ChEBI" id="CHEBI:29105"/>
        <label>1</label>
        <note>structural</note>
    </ligand>
</feature>
<feature type="binding site" evidence="1">
    <location>
        <position position="182"/>
    </location>
    <ligand>
        <name>Ca(2+)</name>
        <dbReference type="ChEBI" id="CHEBI:29108"/>
        <label>3</label>
    </ligand>
</feature>
<feature type="binding site" evidence="1">
    <location>
        <position position="183"/>
    </location>
    <ligand>
        <name>Ca(2+)</name>
        <dbReference type="ChEBI" id="CHEBI:29108"/>
        <label>3</label>
    </ligand>
</feature>
<feature type="binding site" evidence="1">
    <location>
        <position position="185"/>
    </location>
    <ligand>
        <name>Ca(2+)</name>
        <dbReference type="ChEBI" id="CHEBI:29108"/>
        <label>3</label>
    </ligand>
</feature>
<feature type="binding site" evidence="1">
    <location>
        <position position="187"/>
    </location>
    <ligand>
        <name>Ca(2+)</name>
        <dbReference type="ChEBI" id="CHEBI:29108"/>
        <label>3</label>
    </ligand>
</feature>
<feature type="binding site" evidence="1">
    <location>
        <position position="190"/>
    </location>
    <ligand>
        <name>Zn(2+)</name>
        <dbReference type="ChEBI" id="CHEBI:29105"/>
        <label>1</label>
        <note>structural</note>
    </ligand>
</feature>
<feature type="binding site" evidence="1">
    <location>
        <position position="197"/>
    </location>
    <ligand>
        <name>Ca(2+)</name>
        <dbReference type="ChEBI" id="CHEBI:29108"/>
        <label>2</label>
    </ligand>
</feature>
<feature type="binding site" evidence="1">
    <location>
        <position position="199"/>
    </location>
    <ligand>
        <name>Ca(2+)</name>
        <dbReference type="ChEBI" id="CHEBI:29108"/>
        <label>2</label>
    </ligand>
</feature>
<feature type="binding site" evidence="1">
    <location>
        <position position="201"/>
    </location>
    <ligand>
        <name>Ca(2+)</name>
        <dbReference type="ChEBI" id="CHEBI:29108"/>
        <label>2</label>
    </ligand>
</feature>
<feature type="binding site" evidence="1">
    <location>
        <position position="203"/>
    </location>
    <ligand>
        <name>Zn(2+)</name>
        <dbReference type="ChEBI" id="CHEBI:29105"/>
        <label>1</label>
        <note>structural</note>
    </ligand>
</feature>
<feature type="binding site" evidence="1">
    <location>
        <position position="205"/>
    </location>
    <ligand>
        <name>Ca(2+)</name>
        <dbReference type="ChEBI" id="CHEBI:29108"/>
        <label>3</label>
    </ligand>
</feature>
<feature type="binding site" evidence="1">
    <location>
        <position position="206"/>
    </location>
    <ligand>
        <name>Ca(2+)</name>
        <dbReference type="ChEBI" id="CHEBI:29108"/>
        <label>1</label>
    </ligand>
</feature>
<feature type="binding site" evidence="1">
    <location>
        <position position="208"/>
    </location>
    <ligand>
        <name>Ca(2+)</name>
        <dbReference type="ChEBI" id="CHEBI:29108"/>
        <label>1</label>
    </ligand>
</feature>
<feature type="binding site" evidence="1">
    <location>
        <position position="208"/>
    </location>
    <ligand>
        <name>Ca(2+)</name>
        <dbReference type="ChEBI" id="CHEBI:29108"/>
        <label>3</label>
    </ligand>
</feature>
<feature type="binding site" evidence="1">
    <location>
        <position position="401"/>
    </location>
    <ligand>
        <name>Zn(2+)</name>
        <dbReference type="ChEBI" id="CHEBI:29105"/>
        <label>2</label>
        <note>catalytic</note>
    </ligand>
</feature>
<feature type="binding site" evidence="1">
    <location>
        <position position="405"/>
    </location>
    <ligand>
        <name>Zn(2+)</name>
        <dbReference type="ChEBI" id="CHEBI:29105"/>
        <label>2</label>
        <note>catalytic</note>
    </ligand>
</feature>
<feature type="binding site" evidence="1">
    <location>
        <position position="411"/>
    </location>
    <ligand>
        <name>Zn(2+)</name>
        <dbReference type="ChEBI" id="CHEBI:29105"/>
        <label>2</label>
        <note>catalytic</note>
    </ligand>
</feature>
<feature type="glycosylation site" description="N-linked (GlcNAc...) asparagine" evidence="2">
    <location>
        <position position="39"/>
    </location>
</feature>
<feature type="glycosylation site" description="N-linked (GlcNAc...) asparagine" evidence="2">
    <location>
        <position position="120"/>
    </location>
</feature>
<feature type="glycosylation site" description="N-linked (GlcNAc...) asparagine" evidence="2">
    <location>
        <position position="127"/>
    </location>
</feature>
<feature type="disulfide bond" evidence="3">
    <location>
        <begin position="230"/>
        <end position="256"/>
    </location>
</feature>
<feature type="disulfide bond" evidence="3">
    <location>
        <begin position="244"/>
        <end position="271"/>
    </location>
</feature>
<feature type="disulfide bond" evidence="3">
    <location>
        <begin position="288"/>
        <end position="314"/>
    </location>
</feature>
<feature type="disulfide bond" evidence="3">
    <location>
        <begin position="302"/>
        <end position="329"/>
    </location>
</feature>
<feature type="disulfide bond" evidence="3">
    <location>
        <begin position="347"/>
        <end position="373"/>
    </location>
</feature>
<feature type="disulfide bond" evidence="3">
    <location>
        <begin position="361"/>
        <end position="388"/>
    </location>
</feature>
<feature type="disulfide bond" evidence="3">
    <location>
        <begin position="534"/>
        <end position="729"/>
    </location>
</feature>
<feature type="sequence variant" evidence="11">
    <original>P</original>
    <variation>A</variation>
    <location>
        <position position="514"/>
    </location>
</feature>
<feature type="sequence variant" evidence="11">
    <original>L</original>
    <variation>P</variation>
    <location>
        <position position="639"/>
    </location>
</feature>
<feature type="sequence variant" evidence="11">
    <original>H</original>
    <variation>P</variation>
    <location>
        <position position="711"/>
    </location>
</feature>
<feature type="sequence conflict" description="In Ref. 2; AAB28942." evidence="12" ref="2">
    <original>A</original>
    <variation>C</variation>
    <location>
        <position position="20"/>
    </location>
</feature>
<feature type="sequence conflict" description="In Ref. 2; AAB28942." evidence="12" ref="2">
    <original>QP</original>
    <variation>HA</variation>
    <location>
        <begin position="25"/>
        <end position="26"/>
    </location>
</feature>
<feature type="sequence conflict" description="In Ref. 5; BAB23442." evidence="12" ref="5">
    <original>P</original>
    <variation>T</variation>
    <location>
        <position position="466"/>
    </location>
</feature>
<protein>
    <recommendedName>
        <fullName>Matrix metalloproteinase-9</fullName>
        <shortName>MMP-9</shortName>
        <ecNumber evidence="1">3.4.24.35</ecNumber>
    </recommendedName>
    <alternativeName>
        <fullName>92 kDa gelatinase</fullName>
    </alternativeName>
    <alternativeName>
        <fullName>92 kDa type IV collagenase</fullName>
    </alternativeName>
    <alternativeName>
        <fullName>Gelatinase B</fullName>
        <shortName>GELB</shortName>
    </alternativeName>
</protein>
<accession>P41245</accession>
<accession>Q06788</accession>
<accession>Q80XI8</accession>
<accession>Q9DC02</accession>